<gene>
    <name type="ORF">SPBC17D11.08</name>
</gene>
<protein>
    <recommendedName>
        <fullName>Uncharacterized WD repeat-containing protein C17D11.08</fullName>
    </recommendedName>
</protein>
<feature type="chain" id="PRO_0000316548" description="Uncharacterized WD repeat-containing protein C17D11.08">
    <location>
        <begin position="1"/>
        <end position="435"/>
    </location>
</feature>
<feature type="repeat" description="WD 1">
    <location>
        <begin position="105"/>
        <end position="149"/>
    </location>
</feature>
<feature type="repeat" description="WD 2">
    <location>
        <begin position="164"/>
        <end position="204"/>
    </location>
</feature>
<feature type="repeat" description="WD 3">
    <location>
        <begin position="207"/>
        <end position="247"/>
    </location>
</feature>
<feature type="repeat" description="WD 4">
    <location>
        <begin position="313"/>
        <end position="353"/>
    </location>
</feature>
<feature type="region of interest" description="Disordered" evidence="1">
    <location>
        <begin position="352"/>
        <end position="371"/>
    </location>
</feature>
<feature type="compositionally biased region" description="Low complexity" evidence="1">
    <location>
        <begin position="358"/>
        <end position="371"/>
    </location>
</feature>
<feature type="modified residue" description="Phosphoserine" evidence="3">
    <location>
        <position position="266"/>
    </location>
</feature>
<feature type="modified residue" description="Phosphoserine" evidence="3">
    <location>
        <position position="388"/>
    </location>
</feature>
<name>YBE8_SCHPO</name>
<dbReference type="EMBL" id="CU329671">
    <property type="protein sequence ID" value="CAA21079.1"/>
    <property type="molecule type" value="Genomic_DNA"/>
</dbReference>
<dbReference type="PIR" id="T39719">
    <property type="entry name" value="T39719"/>
</dbReference>
<dbReference type="SMR" id="O74763"/>
<dbReference type="BioGRID" id="276172">
    <property type="interactions" value="19"/>
</dbReference>
<dbReference type="FunCoup" id="O74763">
    <property type="interactions" value="647"/>
</dbReference>
<dbReference type="STRING" id="284812.O74763"/>
<dbReference type="iPTMnet" id="O74763"/>
<dbReference type="PaxDb" id="4896-SPBC17D11.08.1"/>
<dbReference type="EnsemblFungi" id="SPBC17D11.08.1">
    <property type="protein sequence ID" value="SPBC17D11.08.1:pep"/>
    <property type="gene ID" value="SPBC17D11.08"/>
</dbReference>
<dbReference type="KEGG" id="spo:2539614"/>
<dbReference type="PomBase" id="SPBC17D11.08"/>
<dbReference type="VEuPathDB" id="FungiDB:SPBC17D11.08"/>
<dbReference type="eggNOG" id="KOG0290">
    <property type="taxonomic scope" value="Eukaryota"/>
</dbReference>
<dbReference type="HOGENOM" id="CLU_013694_1_1_1"/>
<dbReference type="InParanoid" id="O74763"/>
<dbReference type="OMA" id="NEDWMAI"/>
<dbReference type="PhylomeDB" id="O74763"/>
<dbReference type="Reactome" id="R-SPO-8951664">
    <property type="pathway name" value="Neddylation"/>
</dbReference>
<dbReference type="PRO" id="PR:O74763"/>
<dbReference type="Proteomes" id="UP000002485">
    <property type="component" value="Chromosome II"/>
</dbReference>
<dbReference type="GO" id="GO:0080008">
    <property type="term" value="C:Cul4-RING E3 ubiquitin ligase complex"/>
    <property type="evidence" value="ECO:0000250"/>
    <property type="project" value="PomBase"/>
</dbReference>
<dbReference type="GO" id="GO:0005794">
    <property type="term" value="C:Golgi apparatus"/>
    <property type="evidence" value="ECO:0007669"/>
    <property type="project" value="UniProtKB-SubCell"/>
</dbReference>
<dbReference type="Gene3D" id="2.130.10.10">
    <property type="entry name" value="YVTN repeat-like/Quinoprotein amine dehydrogenase"/>
    <property type="match status" value="1"/>
</dbReference>
<dbReference type="InterPro" id="IPR045159">
    <property type="entry name" value="DCAF7-like"/>
</dbReference>
<dbReference type="InterPro" id="IPR015943">
    <property type="entry name" value="WD40/YVTN_repeat-like_dom_sf"/>
</dbReference>
<dbReference type="InterPro" id="IPR019775">
    <property type="entry name" value="WD40_repeat_CS"/>
</dbReference>
<dbReference type="InterPro" id="IPR036322">
    <property type="entry name" value="WD40_repeat_dom_sf"/>
</dbReference>
<dbReference type="InterPro" id="IPR001680">
    <property type="entry name" value="WD40_rpt"/>
</dbReference>
<dbReference type="PANTHER" id="PTHR19919">
    <property type="entry name" value="WD REPEAT CONTAINING PROTEIN"/>
    <property type="match status" value="1"/>
</dbReference>
<dbReference type="Pfam" id="PF00400">
    <property type="entry name" value="WD40"/>
    <property type="match status" value="2"/>
</dbReference>
<dbReference type="SMART" id="SM00320">
    <property type="entry name" value="WD40"/>
    <property type="match status" value="4"/>
</dbReference>
<dbReference type="SUPFAM" id="SSF50978">
    <property type="entry name" value="WD40 repeat-like"/>
    <property type="match status" value="1"/>
</dbReference>
<dbReference type="PROSITE" id="PS00678">
    <property type="entry name" value="WD_REPEATS_1"/>
    <property type="match status" value="1"/>
</dbReference>
<dbReference type="PROSITE" id="PS50082">
    <property type="entry name" value="WD_REPEATS_2"/>
    <property type="match status" value="2"/>
</dbReference>
<dbReference type="PROSITE" id="PS50294">
    <property type="entry name" value="WD_REPEATS_REGION"/>
    <property type="match status" value="2"/>
</dbReference>
<organism>
    <name type="scientific">Schizosaccharomyces pombe (strain 972 / ATCC 24843)</name>
    <name type="common">Fission yeast</name>
    <dbReference type="NCBI Taxonomy" id="284812"/>
    <lineage>
        <taxon>Eukaryota</taxon>
        <taxon>Fungi</taxon>
        <taxon>Dikarya</taxon>
        <taxon>Ascomycota</taxon>
        <taxon>Taphrinomycotina</taxon>
        <taxon>Schizosaccharomycetes</taxon>
        <taxon>Schizosaccharomycetales</taxon>
        <taxon>Schizosaccharomycetaceae</taxon>
        <taxon>Schizosaccharomyces</taxon>
    </lineage>
</organism>
<comment type="subcellular location">
    <subcellularLocation>
        <location evidence="2">Cytoplasm</location>
    </subcellularLocation>
    <subcellularLocation>
        <location evidence="2">Golgi apparatus</location>
    </subcellularLocation>
</comment>
<sequence length="435" mass="47743">MTDLRRNRYSISAGVGKSVLDSLGKFYGSPKRQLPNKFEAGKEYTGYNAPWIPFALDWLKQGKYSSEWIAMGSLNEEPNNMIQLLKLITGDDGNSHLEKAQAATDLEYPVTKLLWNPSSVGSNTDSQLLASTDQQLRLWKTDFEAGIDSPLLCQASLSTHVKTHNNAPLTSFDWCKTDPSYIVVSSLDTTCTVWDIVAQQSKTQLIAHDKEVYDVAFLKDSINVFVSVGADGSVRMFDLRSLDHSTIIYEGDSTFWKRNGDYTNASPPVSAPLLRLSACDSDVNLMATFHHNSSDVQMIDIRVPGTAYATLRGHKGDVNAVKWMPGSKSKLATCGDDCVVSLWDLDQPVNPSPAPTLSVSGTTPGMTGSTSEYVTPVSSVNSMRETASPLNADNQYSPLLSWKLEHEVNNLSWSVKNDGLAVVYGKSLEILKVPQ</sequence>
<evidence type="ECO:0000256" key="1">
    <source>
        <dbReference type="SAM" id="MobiDB-lite"/>
    </source>
</evidence>
<evidence type="ECO:0000269" key="2">
    <source>
    </source>
</evidence>
<evidence type="ECO:0000269" key="3">
    <source>
    </source>
</evidence>
<proteinExistence type="evidence at protein level"/>
<reference key="1">
    <citation type="journal article" date="2002" name="Nature">
        <title>The genome sequence of Schizosaccharomyces pombe.</title>
        <authorList>
            <person name="Wood V."/>
            <person name="Gwilliam R."/>
            <person name="Rajandream M.A."/>
            <person name="Lyne M.H."/>
            <person name="Lyne R."/>
            <person name="Stewart A."/>
            <person name="Sgouros J.G."/>
            <person name="Peat N."/>
            <person name="Hayles J."/>
            <person name="Baker S.G."/>
            <person name="Basham D."/>
            <person name="Bowman S."/>
            <person name="Brooks K."/>
            <person name="Brown D."/>
            <person name="Brown S."/>
            <person name="Chillingworth T."/>
            <person name="Churcher C.M."/>
            <person name="Collins M."/>
            <person name="Connor R."/>
            <person name="Cronin A."/>
            <person name="Davis P."/>
            <person name="Feltwell T."/>
            <person name="Fraser A."/>
            <person name="Gentles S."/>
            <person name="Goble A."/>
            <person name="Hamlin N."/>
            <person name="Harris D.E."/>
            <person name="Hidalgo J."/>
            <person name="Hodgson G."/>
            <person name="Holroyd S."/>
            <person name="Hornsby T."/>
            <person name="Howarth S."/>
            <person name="Huckle E.J."/>
            <person name="Hunt S."/>
            <person name="Jagels K."/>
            <person name="James K.D."/>
            <person name="Jones L."/>
            <person name="Jones M."/>
            <person name="Leather S."/>
            <person name="McDonald S."/>
            <person name="McLean J."/>
            <person name="Mooney P."/>
            <person name="Moule S."/>
            <person name="Mungall K.L."/>
            <person name="Murphy L.D."/>
            <person name="Niblett D."/>
            <person name="Odell C."/>
            <person name="Oliver K."/>
            <person name="O'Neil S."/>
            <person name="Pearson D."/>
            <person name="Quail M.A."/>
            <person name="Rabbinowitsch E."/>
            <person name="Rutherford K.M."/>
            <person name="Rutter S."/>
            <person name="Saunders D."/>
            <person name="Seeger K."/>
            <person name="Sharp S."/>
            <person name="Skelton J."/>
            <person name="Simmonds M.N."/>
            <person name="Squares R."/>
            <person name="Squares S."/>
            <person name="Stevens K."/>
            <person name="Taylor K."/>
            <person name="Taylor R.G."/>
            <person name="Tivey A."/>
            <person name="Walsh S.V."/>
            <person name="Warren T."/>
            <person name="Whitehead S."/>
            <person name="Woodward J.R."/>
            <person name="Volckaert G."/>
            <person name="Aert R."/>
            <person name="Robben J."/>
            <person name="Grymonprez B."/>
            <person name="Weltjens I."/>
            <person name="Vanstreels E."/>
            <person name="Rieger M."/>
            <person name="Schaefer M."/>
            <person name="Mueller-Auer S."/>
            <person name="Gabel C."/>
            <person name="Fuchs M."/>
            <person name="Duesterhoeft A."/>
            <person name="Fritzc C."/>
            <person name="Holzer E."/>
            <person name="Moestl D."/>
            <person name="Hilbert H."/>
            <person name="Borzym K."/>
            <person name="Langer I."/>
            <person name="Beck A."/>
            <person name="Lehrach H."/>
            <person name="Reinhardt R."/>
            <person name="Pohl T.M."/>
            <person name="Eger P."/>
            <person name="Zimmermann W."/>
            <person name="Wedler H."/>
            <person name="Wambutt R."/>
            <person name="Purnelle B."/>
            <person name="Goffeau A."/>
            <person name="Cadieu E."/>
            <person name="Dreano S."/>
            <person name="Gloux S."/>
            <person name="Lelaure V."/>
            <person name="Mottier S."/>
            <person name="Galibert F."/>
            <person name="Aves S.J."/>
            <person name="Xiang Z."/>
            <person name="Hunt C."/>
            <person name="Moore K."/>
            <person name="Hurst S.M."/>
            <person name="Lucas M."/>
            <person name="Rochet M."/>
            <person name="Gaillardin C."/>
            <person name="Tallada V.A."/>
            <person name="Garzon A."/>
            <person name="Thode G."/>
            <person name="Daga R.R."/>
            <person name="Cruzado L."/>
            <person name="Jimenez J."/>
            <person name="Sanchez M."/>
            <person name="del Rey F."/>
            <person name="Benito J."/>
            <person name="Dominguez A."/>
            <person name="Revuelta J.L."/>
            <person name="Moreno S."/>
            <person name="Armstrong J."/>
            <person name="Forsburg S.L."/>
            <person name="Cerutti L."/>
            <person name="Lowe T."/>
            <person name="McCombie W.R."/>
            <person name="Paulsen I."/>
            <person name="Potashkin J."/>
            <person name="Shpakovski G.V."/>
            <person name="Ussery D."/>
            <person name="Barrell B.G."/>
            <person name="Nurse P."/>
        </authorList>
    </citation>
    <scope>NUCLEOTIDE SEQUENCE [LARGE SCALE GENOMIC DNA]</scope>
    <source>
        <strain>972 / ATCC 24843</strain>
    </source>
</reference>
<reference key="2">
    <citation type="journal article" date="2006" name="Nat. Biotechnol.">
        <title>ORFeome cloning and global analysis of protein localization in the fission yeast Schizosaccharomyces pombe.</title>
        <authorList>
            <person name="Matsuyama A."/>
            <person name="Arai R."/>
            <person name="Yashiroda Y."/>
            <person name="Shirai A."/>
            <person name="Kamata A."/>
            <person name="Sekido S."/>
            <person name="Kobayashi Y."/>
            <person name="Hashimoto A."/>
            <person name="Hamamoto M."/>
            <person name="Hiraoka Y."/>
            <person name="Horinouchi S."/>
            <person name="Yoshida M."/>
        </authorList>
    </citation>
    <scope>SUBCELLULAR LOCATION [LARGE SCALE ANALYSIS]</scope>
</reference>
<reference key="3">
    <citation type="journal article" date="2008" name="J. Proteome Res.">
        <title>Phosphoproteome analysis of fission yeast.</title>
        <authorList>
            <person name="Wilson-Grady J.T."/>
            <person name="Villen J."/>
            <person name="Gygi S.P."/>
        </authorList>
    </citation>
    <scope>PHOSPHORYLATION [LARGE SCALE ANALYSIS] AT SER-266 AND SER-388</scope>
    <scope>IDENTIFICATION BY MASS SPECTROMETRY</scope>
</reference>
<accession>O74763</accession>
<keyword id="KW-0963">Cytoplasm</keyword>
<keyword id="KW-0333">Golgi apparatus</keyword>
<keyword id="KW-0597">Phosphoprotein</keyword>
<keyword id="KW-1185">Reference proteome</keyword>
<keyword id="KW-0677">Repeat</keyword>
<keyword id="KW-0853">WD repeat</keyword>